<reference key="1">
    <citation type="submission" date="2003-03" db="EMBL/GenBank/DDBJ databases">
        <title>A new member of the SLC38 family of neutral amino acid transporters.</title>
        <authorList>
            <person name="Varoqui H."/>
            <person name="Mackenzie B."/>
            <person name="Morris M."/>
            <person name="Schafer M.K."/>
            <person name="Weihe E."/>
            <person name="Erickson J.D."/>
        </authorList>
    </citation>
    <scope>NUCLEOTIDE SEQUENCE [MRNA]</scope>
</reference>
<gene>
    <name evidence="6" type="primary">Slc38a6</name>
    <name type="synonym">Nat1</name>
    <name evidence="1" type="synonym">Snat6</name>
</gene>
<sequence>MQASRYSIEAEPGWYVSVQQPEEAVAAEEWSPLLSNEPRRQGSSGASFGLSVFNVMNAIMGSGILGLAYVMANTGILGFSFLLLLVALLASYSVHLLLAMCIHTAVTSYEDLGLFAFGLPGKVVVAGTIIIQNIGAMSSYLLIIKTELPAAISEVLPSDHSGAWYLDGQMLLIIICVGIVFPLSLLPKIGFLGYTSSLSFFFMVFFALVVVIKKWAVPCPLTLNCINAVFQISNATDDCKPKLFHFSKESVYAIPTMAFSFLCHTSVLPIYCELRSPSKKRMQNVTNTAIALSFLVYFVSALFGYLTFYDKVESELLQGYSKYLPHDAAVMAVKLCILFAVLLTVPLIHFPARKALMMILFSNYPFSWIRHSLTTLALNIIIVLLAIYVPDIRNVFGVVGASTSTCLIFVFPGLFYLKLSREDFLSWKKLGALSLLSTGTVVGSFSLVLIILDWVNK</sequence>
<feature type="chain" id="PRO_0000311422" description="Solute carrier family 38 member 6">
    <location>
        <begin position="1"/>
        <end position="457"/>
    </location>
</feature>
<feature type="transmembrane region" description="Helical" evidence="3">
    <location>
        <begin position="48"/>
        <end position="68"/>
    </location>
</feature>
<feature type="transmembrane region" description="Helical" evidence="3">
    <location>
        <begin position="70"/>
        <end position="90"/>
    </location>
</feature>
<feature type="transmembrane region" description="Helical" evidence="3">
    <location>
        <begin position="112"/>
        <end position="132"/>
    </location>
</feature>
<feature type="transmembrane region" description="Helical" evidence="3">
    <location>
        <begin position="171"/>
        <end position="191"/>
    </location>
</feature>
<feature type="transmembrane region" description="Helical" evidence="3">
    <location>
        <begin position="192"/>
        <end position="212"/>
    </location>
</feature>
<feature type="transmembrane region" description="Helical" evidence="3">
    <location>
        <begin position="251"/>
        <end position="271"/>
    </location>
</feature>
<feature type="transmembrane region" description="Helical" evidence="3">
    <location>
        <begin position="289"/>
        <end position="309"/>
    </location>
</feature>
<feature type="transmembrane region" description="Helical" evidence="3">
    <location>
        <begin position="328"/>
        <end position="348"/>
    </location>
</feature>
<feature type="transmembrane region" description="Helical" evidence="3">
    <location>
        <begin position="372"/>
        <end position="392"/>
    </location>
</feature>
<feature type="transmembrane region" description="Helical" evidence="3">
    <location>
        <begin position="395"/>
        <end position="415"/>
    </location>
</feature>
<feature type="transmembrane region" description="Helical" evidence="3">
    <location>
        <begin position="432"/>
        <end position="452"/>
    </location>
</feature>
<feature type="modified residue" description="N-acetylmethionine" evidence="2">
    <location>
        <position position="1"/>
    </location>
</feature>
<feature type="modified residue" description="Phosphoserine" evidence="2">
    <location>
        <position position="4"/>
    </location>
</feature>
<feature type="modified residue" description="Phosphoserine" evidence="2">
    <location>
        <position position="7"/>
    </location>
</feature>
<feature type="glycosylation site" description="N-linked (GlcNAc...) asparagine" evidence="3">
    <location>
        <position position="234"/>
    </location>
</feature>
<feature type="glycosylation site" description="N-linked (GlcNAc...) asparagine" evidence="3">
    <location>
        <position position="284"/>
    </location>
</feature>
<feature type="disulfide bond" evidence="4">
    <location>
        <begin position="219"/>
        <end position="239"/>
    </location>
</feature>
<proteinExistence type="evidence at transcript level"/>
<organism>
    <name type="scientific">Rattus norvegicus</name>
    <name type="common">Rat</name>
    <dbReference type="NCBI Taxonomy" id="10116"/>
    <lineage>
        <taxon>Eukaryota</taxon>
        <taxon>Metazoa</taxon>
        <taxon>Chordata</taxon>
        <taxon>Craniata</taxon>
        <taxon>Vertebrata</taxon>
        <taxon>Euteleostomi</taxon>
        <taxon>Mammalia</taxon>
        <taxon>Eutheria</taxon>
        <taxon>Euarchontoglires</taxon>
        <taxon>Glires</taxon>
        <taxon>Rodentia</taxon>
        <taxon>Myomorpha</taxon>
        <taxon>Muroidea</taxon>
        <taxon>Muridae</taxon>
        <taxon>Murinae</taxon>
        <taxon>Rattus</taxon>
    </lineage>
</organism>
<name>S38A6_RAT</name>
<accession>Q6WWW3</accession>
<keyword id="KW-0007">Acetylation</keyword>
<keyword id="KW-0029">Amino-acid transport</keyword>
<keyword id="KW-1003">Cell membrane</keyword>
<keyword id="KW-1015">Disulfide bond</keyword>
<keyword id="KW-0325">Glycoprotein</keyword>
<keyword id="KW-0472">Membrane</keyword>
<keyword id="KW-0597">Phosphoprotein</keyword>
<keyword id="KW-1185">Reference proteome</keyword>
<keyword id="KW-0770">Synapse</keyword>
<keyword id="KW-0812">Transmembrane</keyword>
<keyword id="KW-1133">Transmembrane helix</keyword>
<keyword id="KW-0813">Transport</keyword>
<dbReference type="EMBL" id="AY266018">
    <property type="protein sequence ID" value="AAP91872.1"/>
    <property type="molecule type" value="mRNA"/>
</dbReference>
<dbReference type="RefSeq" id="NP_001013117.1">
    <property type="nucleotide sequence ID" value="NM_001013099.1"/>
</dbReference>
<dbReference type="SMR" id="Q6WWW3"/>
<dbReference type="FunCoup" id="Q6WWW3">
    <property type="interactions" value="473"/>
</dbReference>
<dbReference type="STRING" id="10116.ENSRNOP00000035818"/>
<dbReference type="GlyCosmos" id="Q6WWW3">
    <property type="glycosylation" value="2 sites, No reported glycans"/>
</dbReference>
<dbReference type="GlyGen" id="Q6WWW3">
    <property type="glycosylation" value="2 sites"/>
</dbReference>
<dbReference type="PhosphoSitePlus" id="Q6WWW3"/>
<dbReference type="PaxDb" id="10116-ENSRNOP00000035818"/>
<dbReference type="GeneID" id="299139"/>
<dbReference type="KEGG" id="rno:299139"/>
<dbReference type="UCSC" id="RGD:1310330">
    <property type="organism name" value="rat"/>
</dbReference>
<dbReference type="AGR" id="RGD:1310330"/>
<dbReference type="CTD" id="145389"/>
<dbReference type="RGD" id="1310330">
    <property type="gene designation" value="Slc38a6"/>
</dbReference>
<dbReference type="eggNOG" id="KOG1305">
    <property type="taxonomic scope" value="Eukaryota"/>
</dbReference>
<dbReference type="InParanoid" id="Q6WWW3"/>
<dbReference type="OrthoDB" id="28208at2759"/>
<dbReference type="PhylomeDB" id="Q6WWW3"/>
<dbReference type="PRO" id="PR:Q6WWW3"/>
<dbReference type="Proteomes" id="UP000002494">
    <property type="component" value="Unplaced"/>
</dbReference>
<dbReference type="GO" id="GO:0005886">
    <property type="term" value="C:plasma membrane"/>
    <property type="evidence" value="ECO:0000250"/>
    <property type="project" value="UniProtKB"/>
</dbReference>
<dbReference type="GO" id="GO:0045202">
    <property type="term" value="C:synapse"/>
    <property type="evidence" value="ECO:0007669"/>
    <property type="project" value="UniProtKB-SubCell"/>
</dbReference>
<dbReference type="GO" id="GO:0022853">
    <property type="term" value="F:active monoatomic ion transmembrane transporter activity"/>
    <property type="evidence" value="ECO:0007669"/>
    <property type="project" value="UniProtKB-ARBA"/>
</dbReference>
<dbReference type="GO" id="GO:0022890">
    <property type="term" value="F:inorganic cation transmembrane transporter activity"/>
    <property type="evidence" value="ECO:0007669"/>
    <property type="project" value="UniProtKB-ARBA"/>
</dbReference>
<dbReference type="GO" id="GO:0005313">
    <property type="term" value="F:L-glutamate transmembrane transporter activity"/>
    <property type="evidence" value="ECO:0000250"/>
    <property type="project" value="UniProtKB"/>
</dbReference>
<dbReference type="GO" id="GO:0015186">
    <property type="term" value="F:L-glutamine transmembrane transporter activity"/>
    <property type="evidence" value="ECO:0000250"/>
    <property type="project" value="UniProtKB"/>
</dbReference>
<dbReference type="GO" id="GO:0008324">
    <property type="term" value="F:monoatomic cation transmembrane transporter activity"/>
    <property type="evidence" value="ECO:0007669"/>
    <property type="project" value="UniProtKB-ARBA"/>
</dbReference>
<dbReference type="GO" id="GO:0015291">
    <property type="term" value="F:secondary active transmembrane transporter activity"/>
    <property type="evidence" value="ECO:0007669"/>
    <property type="project" value="UniProtKB-ARBA"/>
</dbReference>
<dbReference type="GO" id="GO:0003333">
    <property type="term" value="P:amino acid transmembrane transport"/>
    <property type="evidence" value="ECO:0000318"/>
    <property type="project" value="GO_Central"/>
</dbReference>
<dbReference type="GO" id="GO:0006868">
    <property type="term" value="P:glutamine transport"/>
    <property type="evidence" value="ECO:0000318"/>
    <property type="project" value="GO_Central"/>
</dbReference>
<dbReference type="GO" id="GO:0098662">
    <property type="term" value="P:inorganic cation transmembrane transport"/>
    <property type="evidence" value="ECO:0007669"/>
    <property type="project" value="UniProtKB-ARBA"/>
</dbReference>
<dbReference type="InterPro" id="IPR013057">
    <property type="entry name" value="AA_transpt_TM"/>
</dbReference>
<dbReference type="PANTHER" id="PTHR22950">
    <property type="entry name" value="AMINO ACID TRANSPORTER"/>
    <property type="match status" value="1"/>
</dbReference>
<dbReference type="PANTHER" id="PTHR22950:SF366">
    <property type="entry name" value="SODIUM-COUPLED NEUTRAL AMINO ACID TRANSPORTER 6-RELATED"/>
    <property type="match status" value="1"/>
</dbReference>
<dbReference type="Pfam" id="PF01490">
    <property type="entry name" value="Aa_trans"/>
    <property type="match status" value="1"/>
</dbReference>
<evidence type="ECO:0000250" key="1">
    <source>
        <dbReference type="UniProtKB" id="G3UVW3"/>
    </source>
</evidence>
<evidence type="ECO:0000250" key="2">
    <source>
        <dbReference type="UniProtKB" id="Q8IZM9"/>
    </source>
</evidence>
<evidence type="ECO:0000255" key="3"/>
<evidence type="ECO:0000255" key="4">
    <source>
        <dbReference type="PROSITE-ProRule" id="PRU00114"/>
    </source>
</evidence>
<evidence type="ECO:0000305" key="5"/>
<evidence type="ECO:0000312" key="6">
    <source>
        <dbReference type="RGD" id="1310330"/>
    </source>
</evidence>
<comment type="function">
    <text evidence="1">Amino acid transporter with an apparent selectivity for L-glutamine and L-glutamate. May facilitate glutamine uptake in excitatory neurons. The transport mechanism remains to be elucidated.</text>
</comment>
<comment type="catalytic activity">
    <reaction evidence="1">
        <text>L-glutamine(out) = L-glutamine(in)</text>
        <dbReference type="Rhea" id="RHEA:73419"/>
        <dbReference type="ChEBI" id="CHEBI:58359"/>
    </reaction>
</comment>
<comment type="catalytic activity">
    <reaction evidence="1">
        <text>L-glutamate(out) = L-glutamate(in)</text>
        <dbReference type="Rhea" id="RHEA:66336"/>
        <dbReference type="ChEBI" id="CHEBI:29985"/>
    </reaction>
</comment>
<comment type="subcellular location">
    <subcellularLocation>
        <location evidence="1">Cell membrane</location>
        <topology evidence="3">Multi-pass membrane protein</topology>
    </subcellularLocation>
    <subcellularLocation>
        <location evidence="1">Synapse</location>
    </subcellularLocation>
    <text evidence="1">Colocalizes with synaptotagmins and SNAP25.</text>
</comment>
<comment type="similarity">
    <text evidence="5">Belongs to the amino acid/polyamine transporter 2 family.</text>
</comment>
<protein>
    <recommendedName>
        <fullName>Solute carrier family 38 member 6</fullName>
    </recommendedName>
    <alternativeName>
        <fullName>Amino acid transporter SLC38A6</fullName>
    </alternativeName>
    <alternativeName>
        <fullName>N-system amino acid transporter 1</fullName>
        <shortName>NAT-1</shortName>
    </alternativeName>
</protein>